<reference key="1">
    <citation type="journal article" date="2004" name="Nat. Genet.">
        <title>Complete sequencing and characterization of 21,243 full-length human cDNAs.</title>
        <authorList>
            <person name="Ota T."/>
            <person name="Suzuki Y."/>
            <person name="Nishikawa T."/>
            <person name="Otsuki T."/>
            <person name="Sugiyama T."/>
            <person name="Irie R."/>
            <person name="Wakamatsu A."/>
            <person name="Hayashi K."/>
            <person name="Sato H."/>
            <person name="Nagai K."/>
            <person name="Kimura K."/>
            <person name="Makita H."/>
            <person name="Sekine M."/>
            <person name="Obayashi M."/>
            <person name="Nishi T."/>
            <person name="Shibahara T."/>
            <person name="Tanaka T."/>
            <person name="Ishii S."/>
            <person name="Yamamoto J."/>
            <person name="Saito K."/>
            <person name="Kawai Y."/>
            <person name="Isono Y."/>
            <person name="Nakamura Y."/>
            <person name="Nagahari K."/>
            <person name="Murakami K."/>
            <person name="Yasuda T."/>
            <person name="Iwayanagi T."/>
            <person name="Wagatsuma M."/>
            <person name="Shiratori A."/>
            <person name="Sudo H."/>
            <person name="Hosoiri T."/>
            <person name="Kaku Y."/>
            <person name="Kodaira H."/>
            <person name="Kondo H."/>
            <person name="Sugawara M."/>
            <person name="Takahashi M."/>
            <person name="Kanda K."/>
            <person name="Yokoi T."/>
            <person name="Furuya T."/>
            <person name="Kikkawa E."/>
            <person name="Omura Y."/>
            <person name="Abe K."/>
            <person name="Kamihara K."/>
            <person name="Katsuta N."/>
            <person name="Sato K."/>
            <person name="Tanikawa M."/>
            <person name="Yamazaki M."/>
            <person name="Ninomiya K."/>
            <person name="Ishibashi T."/>
            <person name="Yamashita H."/>
            <person name="Murakawa K."/>
            <person name="Fujimori K."/>
            <person name="Tanai H."/>
            <person name="Kimata M."/>
            <person name="Watanabe M."/>
            <person name="Hiraoka S."/>
            <person name="Chiba Y."/>
            <person name="Ishida S."/>
            <person name="Ono Y."/>
            <person name="Takiguchi S."/>
            <person name="Watanabe S."/>
            <person name="Yosida M."/>
            <person name="Hotuta T."/>
            <person name="Kusano J."/>
            <person name="Kanehori K."/>
            <person name="Takahashi-Fujii A."/>
            <person name="Hara H."/>
            <person name="Tanase T.-O."/>
            <person name="Nomura Y."/>
            <person name="Togiya S."/>
            <person name="Komai F."/>
            <person name="Hara R."/>
            <person name="Takeuchi K."/>
            <person name="Arita M."/>
            <person name="Imose N."/>
            <person name="Musashino K."/>
            <person name="Yuuki H."/>
            <person name="Oshima A."/>
            <person name="Sasaki N."/>
            <person name="Aotsuka S."/>
            <person name="Yoshikawa Y."/>
            <person name="Matsunawa H."/>
            <person name="Ichihara T."/>
            <person name="Shiohata N."/>
            <person name="Sano S."/>
            <person name="Moriya S."/>
            <person name="Momiyama H."/>
            <person name="Satoh N."/>
            <person name="Takami S."/>
            <person name="Terashima Y."/>
            <person name="Suzuki O."/>
            <person name="Nakagawa S."/>
            <person name="Senoh A."/>
            <person name="Mizoguchi H."/>
            <person name="Goto Y."/>
            <person name="Shimizu F."/>
            <person name="Wakebe H."/>
            <person name="Hishigaki H."/>
            <person name="Watanabe T."/>
            <person name="Sugiyama A."/>
            <person name="Takemoto M."/>
            <person name="Kawakami B."/>
            <person name="Yamazaki M."/>
            <person name="Watanabe K."/>
            <person name="Kumagai A."/>
            <person name="Itakura S."/>
            <person name="Fukuzumi Y."/>
            <person name="Fujimori Y."/>
            <person name="Komiyama M."/>
            <person name="Tashiro H."/>
            <person name="Tanigami A."/>
            <person name="Fujiwara T."/>
            <person name="Ono T."/>
            <person name="Yamada K."/>
            <person name="Fujii Y."/>
            <person name="Ozaki K."/>
            <person name="Hirao M."/>
            <person name="Ohmori Y."/>
            <person name="Kawabata A."/>
            <person name="Hikiji T."/>
            <person name="Kobatake N."/>
            <person name="Inagaki H."/>
            <person name="Ikema Y."/>
            <person name="Okamoto S."/>
            <person name="Okitani R."/>
            <person name="Kawakami T."/>
            <person name="Noguchi S."/>
            <person name="Itoh T."/>
            <person name="Shigeta K."/>
            <person name="Senba T."/>
            <person name="Matsumura K."/>
            <person name="Nakajima Y."/>
            <person name="Mizuno T."/>
            <person name="Morinaga M."/>
            <person name="Sasaki M."/>
            <person name="Togashi T."/>
            <person name="Oyama M."/>
            <person name="Hata H."/>
            <person name="Watanabe M."/>
            <person name="Komatsu T."/>
            <person name="Mizushima-Sugano J."/>
            <person name="Satoh T."/>
            <person name="Shirai Y."/>
            <person name="Takahashi Y."/>
            <person name="Nakagawa K."/>
            <person name="Okumura K."/>
            <person name="Nagase T."/>
            <person name="Nomura N."/>
            <person name="Kikuchi H."/>
            <person name="Masuho Y."/>
            <person name="Yamashita R."/>
            <person name="Nakai K."/>
            <person name="Yada T."/>
            <person name="Nakamura Y."/>
            <person name="Ohara O."/>
            <person name="Isogai T."/>
            <person name="Sugano S."/>
        </authorList>
    </citation>
    <scope>NUCLEOTIDE SEQUENCE [LARGE SCALE MRNA]</scope>
</reference>
<reference key="2">
    <citation type="submission" date="2005-09" db="EMBL/GenBank/DDBJ databases">
        <authorList>
            <person name="Mural R.J."/>
            <person name="Istrail S."/>
            <person name="Sutton G.G."/>
            <person name="Florea L."/>
            <person name="Halpern A.L."/>
            <person name="Mobarry C.M."/>
            <person name="Lippert R."/>
            <person name="Walenz B."/>
            <person name="Shatkay H."/>
            <person name="Dew I."/>
            <person name="Miller J.R."/>
            <person name="Flanigan M.J."/>
            <person name="Edwards N.J."/>
            <person name="Bolanos R."/>
            <person name="Fasulo D."/>
            <person name="Halldorsson B.V."/>
            <person name="Hannenhalli S."/>
            <person name="Turner R."/>
            <person name="Yooseph S."/>
            <person name="Lu F."/>
            <person name="Nusskern D.R."/>
            <person name="Shue B.C."/>
            <person name="Zheng X.H."/>
            <person name="Zhong F."/>
            <person name="Delcher A.L."/>
            <person name="Huson D.H."/>
            <person name="Kravitz S.A."/>
            <person name="Mouchard L."/>
            <person name="Reinert K."/>
            <person name="Remington K.A."/>
            <person name="Clark A.G."/>
            <person name="Waterman M.S."/>
            <person name="Eichler E.E."/>
            <person name="Adams M.D."/>
            <person name="Hunkapiller M.W."/>
            <person name="Myers E.W."/>
            <person name="Venter J.C."/>
        </authorList>
    </citation>
    <scope>NUCLEOTIDE SEQUENCE [LARGE SCALE GENOMIC DNA]</scope>
</reference>
<reference key="3">
    <citation type="journal article" date="2004" name="Genome Res.">
        <title>The status, quality, and expansion of the NIH full-length cDNA project: the Mammalian Gene Collection (MGC).</title>
        <authorList>
            <consortium name="The MGC Project Team"/>
        </authorList>
    </citation>
    <scope>NUCLEOTIDE SEQUENCE [LARGE SCALE MRNA]</scope>
    <source>
        <tissue>Ovary</tissue>
    </source>
</reference>
<evidence type="ECO:0000305" key="1"/>
<comment type="caution">
    <text evidence="1">Product of a dubious gene prediction.</text>
</comment>
<name>ARAS1_HUMAN</name>
<organism>
    <name type="scientific">Homo sapiens</name>
    <name type="common">Human</name>
    <dbReference type="NCBI Taxonomy" id="9606"/>
    <lineage>
        <taxon>Eukaryota</taxon>
        <taxon>Metazoa</taxon>
        <taxon>Chordata</taxon>
        <taxon>Craniata</taxon>
        <taxon>Vertebrata</taxon>
        <taxon>Euteleostomi</taxon>
        <taxon>Mammalia</taxon>
        <taxon>Eutheria</taxon>
        <taxon>Euarchontoglires</taxon>
        <taxon>Primates</taxon>
        <taxon>Haplorrhini</taxon>
        <taxon>Catarrhini</taxon>
        <taxon>Hominidae</taxon>
        <taxon>Homo</taxon>
    </lineage>
</organism>
<dbReference type="EMBL" id="AK314153">
    <property type="protein sequence ID" value="BAG36839.1"/>
    <property type="molecule type" value="mRNA"/>
</dbReference>
<dbReference type="EMBL" id="CH471078">
    <property type="protein sequence ID" value="EAW65939.1"/>
    <property type="molecule type" value="Genomic_DNA"/>
</dbReference>
<dbReference type="EMBL" id="CH471078">
    <property type="protein sequence ID" value="EAW65940.1"/>
    <property type="molecule type" value="Genomic_DNA"/>
</dbReference>
<dbReference type="EMBL" id="BC007251">
    <property type="status" value="NOT_ANNOTATED_CDS"/>
    <property type="molecule type" value="mRNA"/>
</dbReference>
<dbReference type="BioMuta" id="HGNC:20279"/>
<dbReference type="AGR" id="HGNC:20279"/>
<dbReference type="GeneCards" id="ARHGAP5-AS1"/>
<dbReference type="HGNC" id="HGNC:20279">
    <property type="gene designation" value="ARHGAP5-AS1"/>
</dbReference>
<dbReference type="neXtProt" id="NX_Q96IT6"/>
<dbReference type="InParanoid" id="Q96IT6"/>
<dbReference type="PAN-GO" id="Q96IT6">
    <property type="GO annotations" value="0 GO annotations based on evolutionary models"/>
</dbReference>
<dbReference type="PathwayCommons" id="Q96IT6"/>
<dbReference type="Pharos" id="Q96IT6">
    <property type="development level" value="Tdark"/>
</dbReference>
<dbReference type="Proteomes" id="UP000005640">
    <property type="component" value="Unplaced"/>
</dbReference>
<dbReference type="RNAct" id="Q96IT6">
    <property type="molecule type" value="protein"/>
</dbReference>
<feature type="chain" id="PRO_0000089931" description="Putative uncharacterized protein ARHGAP5-AS1">
    <location>
        <begin position="1"/>
        <end position="56"/>
    </location>
</feature>
<accession>Q96IT6</accession>
<accession>B2RAE2</accession>
<accession>D3DS88</accession>
<gene>
    <name type="primary">ARHGAP5-AS1</name>
    <name type="synonym">C14orf128</name>
</gene>
<keyword id="KW-1185">Reference proteome</keyword>
<protein>
    <recommendedName>
        <fullName>Putative uncharacterized protein ARHGAP5-AS1</fullName>
    </recommendedName>
    <alternativeName>
        <fullName>ARHGAP5 antisense RNA 1</fullName>
    </alternativeName>
    <alternativeName>
        <fullName>ARHGAP5 antisense gene protein 1</fullName>
    </alternativeName>
</protein>
<sequence length="56" mass="6106">MQAPDSVRSVKVEREAKTWIEKPRGAGLRVAQKTPVHATTSLTLGTVVHLAFIILP</sequence>
<proteinExistence type="uncertain"/>